<gene>
    <name type="ordered locus">aq_1922</name>
</gene>
<reference key="1">
    <citation type="journal article" date="1998" name="Nature">
        <title>The complete genome of the hyperthermophilic bacterium Aquifex aeolicus.</title>
        <authorList>
            <person name="Deckert G."/>
            <person name="Warren P.V."/>
            <person name="Gaasterland T."/>
            <person name="Young W.G."/>
            <person name="Lenox A.L."/>
            <person name="Graham D.E."/>
            <person name="Overbeek R."/>
            <person name="Snead M.A."/>
            <person name="Keller M."/>
            <person name="Aujay M."/>
            <person name="Huber R."/>
            <person name="Feldman R.A."/>
            <person name="Short J.M."/>
            <person name="Olsen G.J."/>
            <person name="Swanson R.V."/>
        </authorList>
    </citation>
    <scope>NUCLEOTIDE SEQUENCE [LARGE SCALE GENOMIC DNA]</scope>
    <source>
        <strain>VF5</strain>
    </source>
</reference>
<sequence>MKEFWVWVEPFDRKIVSVALEAGANAVVIPEKGRVEEVKKVGRITVIAPDGDLKLGEDVVYVLIKGKEDEERAAKYPPNVKVIVETTDWTVIPLENLIAQREELYAVVKNAQEAEVALQTLEKGVKGVVLKSRDINEIKKVGQIVSEHEEKLELVTIKITKILPLGLGDRVCVDTISLLHRGEGMLVGNSSGGMFLVHAETEENPYVAARPFRVNAGAVHMYIRVPNNRTKYLCELKAGDKVMVYDYKGRGRVTYVGRAKVERRPMLLIEGRYENKKLSCILQNAETIRLTKPDGTPISVSELKEGDEVLGYVEEAGRHFGMKVEETIIEK</sequence>
<evidence type="ECO:0000255" key="1">
    <source>
        <dbReference type="HAMAP-Rule" id="MF_01244"/>
    </source>
</evidence>
<organism>
    <name type="scientific">Aquifex aeolicus (strain VF5)</name>
    <dbReference type="NCBI Taxonomy" id="224324"/>
    <lineage>
        <taxon>Bacteria</taxon>
        <taxon>Pseudomonadati</taxon>
        <taxon>Aquificota</taxon>
        <taxon>Aquificia</taxon>
        <taxon>Aquificales</taxon>
        <taxon>Aquificaceae</taxon>
        <taxon>Aquifex</taxon>
    </lineage>
</organism>
<name>DHQSH_AQUAE</name>
<dbReference type="EC" id="1.4.1.-" evidence="1"/>
<dbReference type="EMBL" id="AE000657">
    <property type="protein sequence ID" value="AAC07721.1"/>
    <property type="molecule type" value="Genomic_DNA"/>
</dbReference>
<dbReference type="PIR" id="C70465">
    <property type="entry name" value="C70465"/>
</dbReference>
<dbReference type="RefSeq" id="NP_214319.1">
    <property type="nucleotide sequence ID" value="NC_000918.1"/>
</dbReference>
<dbReference type="RefSeq" id="WP_010881255.1">
    <property type="nucleotide sequence ID" value="NC_000918.1"/>
</dbReference>
<dbReference type="STRING" id="224324.aq_1922"/>
<dbReference type="EnsemblBacteria" id="AAC07721">
    <property type="protein sequence ID" value="AAC07721"/>
    <property type="gene ID" value="aq_1922"/>
</dbReference>
<dbReference type="KEGG" id="aae:aq_1922"/>
<dbReference type="PATRIC" id="fig|224324.8.peg.1489"/>
<dbReference type="eggNOG" id="COG1465">
    <property type="taxonomic scope" value="Bacteria"/>
</dbReference>
<dbReference type="HOGENOM" id="CLU_056379_0_0_0"/>
<dbReference type="InParanoid" id="O67751"/>
<dbReference type="OrthoDB" id="2043123at2"/>
<dbReference type="Proteomes" id="UP000000798">
    <property type="component" value="Chromosome"/>
</dbReference>
<dbReference type="GO" id="GO:0003856">
    <property type="term" value="F:3-dehydroquinate synthase activity"/>
    <property type="evidence" value="ECO:0007669"/>
    <property type="project" value="InterPro"/>
</dbReference>
<dbReference type="GO" id="GO:0051287">
    <property type="term" value="F:NAD binding"/>
    <property type="evidence" value="ECO:0007669"/>
    <property type="project" value="UniProtKB-UniRule"/>
</dbReference>
<dbReference type="GO" id="GO:0016639">
    <property type="term" value="F:oxidoreductase activity, acting on the CH-NH2 group of donors, NAD or NADP as acceptor"/>
    <property type="evidence" value="ECO:0007669"/>
    <property type="project" value="UniProtKB-UniRule"/>
</dbReference>
<dbReference type="GO" id="GO:0008652">
    <property type="term" value="P:amino acid biosynthetic process"/>
    <property type="evidence" value="ECO:0007669"/>
    <property type="project" value="UniProtKB-KW"/>
</dbReference>
<dbReference type="GO" id="GO:0009073">
    <property type="term" value="P:aromatic amino acid family biosynthetic process"/>
    <property type="evidence" value="ECO:0007669"/>
    <property type="project" value="UniProtKB-UniRule"/>
</dbReference>
<dbReference type="HAMAP" id="MF_01244">
    <property type="entry name" value="Arch_DHQ_synthase"/>
    <property type="match status" value="1"/>
</dbReference>
<dbReference type="InterPro" id="IPR002812">
    <property type="entry name" value="DHQ_synth"/>
</dbReference>
<dbReference type="NCBIfam" id="NF002627">
    <property type="entry name" value="PRK02290.1-5"/>
    <property type="match status" value="1"/>
</dbReference>
<dbReference type="PANTHER" id="PTHR33563">
    <property type="match status" value="1"/>
</dbReference>
<dbReference type="PANTHER" id="PTHR33563:SF1">
    <property type="entry name" value="3-DEHYDROQUINATE SYNTHASE"/>
    <property type="match status" value="1"/>
</dbReference>
<dbReference type="Pfam" id="PF01959">
    <property type="entry name" value="DHQS"/>
    <property type="match status" value="1"/>
</dbReference>
<dbReference type="PIRSF" id="PIRSF006655">
    <property type="entry name" value="DHQ_synth"/>
    <property type="match status" value="1"/>
</dbReference>
<keyword id="KW-0028">Amino-acid biosynthesis</keyword>
<keyword id="KW-0057">Aromatic amino acid biosynthesis</keyword>
<keyword id="KW-0520">NAD</keyword>
<keyword id="KW-0560">Oxidoreductase</keyword>
<keyword id="KW-1185">Reference proteome</keyword>
<protein>
    <recommendedName>
        <fullName evidence="1">3-dehydroquinate synthase homolog</fullName>
        <ecNumber evidence="1">1.4.1.-</ecNumber>
    </recommendedName>
</protein>
<feature type="chain" id="PRO_0000058765" description="3-dehydroquinate synthase homolog">
    <location>
        <begin position="1"/>
        <end position="331"/>
    </location>
</feature>
<proteinExistence type="inferred from homology"/>
<comment type="similarity">
    <text evidence="1">Belongs to the archaeal-type DHQ synthase family.</text>
</comment>
<accession>O67751</accession>